<evidence type="ECO:0000255" key="1">
    <source>
        <dbReference type="HAMAP-Rule" id="MF_01393"/>
    </source>
</evidence>
<name>ATP6_RUTMC</name>
<keyword id="KW-0066">ATP synthesis</keyword>
<keyword id="KW-0997">Cell inner membrane</keyword>
<keyword id="KW-1003">Cell membrane</keyword>
<keyword id="KW-0138">CF(0)</keyword>
<keyword id="KW-0375">Hydrogen ion transport</keyword>
<keyword id="KW-0406">Ion transport</keyword>
<keyword id="KW-0472">Membrane</keyword>
<keyword id="KW-0812">Transmembrane</keyword>
<keyword id="KW-1133">Transmembrane helix</keyword>
<keyword id="KW-0813">Transport</keyword>
<accession>A1AXU8</accession>
<feature type="chain" id="PRO_0000362431" description="ATP synthase subunit a">
    <location>
        <begin position="1"/>
        <end position="284"/>
    </location>
</feature>
<feature type="transmembrane region" description="Helical" evidence="1">
    <location>
        <begin position="47"/>
        <end position="67"/>
    </location>
</feature>
<feature type="transmembrane region" description="Helical" evidence="1">
    <location>
        <begin position="108"/>
        <end position="128"/>
    </location>
</feature>
<feature type="transmembrane region" description="Helical" evidence="1">
    <location>
        <begin position="156"/>
        <end position="176"/>
    </location>
</feature>
<feature type="transmembrane region" description="Helical" evidence="1">
    <location>
        <begin position="233"/>
        <end position="253"/>
    </location>
</feature>
<feature type="transmembrane region" description="Helical" evidence="1">
    <location>
        <begin position="254"/>
        <end position="274"/>
    </location>
</feature>
<comment type="function">
    <text evidence="1">Key component of the proton channel; it plays a direct role in the translocation of protons across the membrane.</text>
</comment>
<comment type="subunit">
    <text evidence="1">F-type ATPases have 2 components, CF(1) - the catalytic core - and CF(0) - the membrane proton channel. CF(1) has five subunits: alpha(3), beta(3), gamma(1), delta(1), epsilon(1). CF(0) has three main subunits: a(1), b(2) and c(9-12). The alpha and beta chains form an alternating ring which encloses part of the gamma chain. CF(1) is attached to CF(0) by a central stalk formed by the gamma and epsilon chains, while a peripheral stalk is formed by the delta and b chains.</text>
</comment>
<comment type="subcellular location">
    <subcellularLocation>
        <location evidence="1">Cell inner membrane</location>
        <topology evidence="1">Multi-pass membrane protein</topology>
    </subcellularLocation>
</comment>
<comment type="similarity">
    <text evidence="1">Belongs to the ATPase A chain family.</text>
</comment>
<reference key="1">
    <citation type="journal article" date="2007" name="Science">
        <title>The Calyptogena magnifica chemoautotrophic symbiont genome.</title>
        <authorList>
            <person name="Newton I.L.G."/>
            <person name="Woyke T."/>
            <person name="Auchtung T.A."/>
            <person name="Dilly G.F."/>
            <person name="Dutton R.J."/>
            <person name="Fisher M.C."/>
            <person name="Fontanez K.M."/>
            <person name="Lau E."/>
            <person name="Stewart F.J."/>
            <person name="Richardson P.M."/>
            <person name="Barry K.W."/>
            <person name="Saunders E."/>
            <person name="Detter J.C."/>
            <person name="Wu D."/>
            <person name="Eisen J.A."/>
            <person name="Cavanaugh C.M."/>
        </authorList>
    </citation>
    <scope>NUCLEOTIDE SEQUENCE [LARGE SCALE GENOMIC DNA]</scope>
</reference>
<proteinExistence type="inferred from homology"/>
<dbReference type="EMBL" id="CP000488">
    <property type="protein sequence ID" value="ABL02755.1"/>
    <property type="molecule type" value="Genomic_DNA"/>
</dbReference>
<dbReference type="RefSeq" id="WP_011738380.1">
    <property type="nucleotide sequence ID" value="NC_008610.1"/>
</dbReference>
<dbReference type="SMR" id="A1AXU8"/>
<dbReference type="STRING" id="413404.Rmag_1051"/>
<dbReference type="KEGG" id="rma:Rmag_1051"/>
<dbReference type="eggNOG" id="COG0356">
    <property type="taxonomic scope" value="Bacteria"/>
</dbReference>
<dbReference type="HOGENOM" id="CLU_041018_1_0_6"/>
<dbReference type="OrthoDB" id="9789241at2"/>
<dbReference type="Proteomes" id="UP000002587">
    <property type="component" value="Chromosome"/>
</dbReference>
<dbReference type="GO" id="GO:0005886">
    <property type="term" value="C:plasma membrane"/>
    <property type="evidence" value="ECO:0007669"/>
    <property type="project" value="UniProtKB-SubCell"/>
</dbReference>
<dbReference type="GO" id="GO:0045259">
    <property type="term" value="C:proton-transporting ATP synthase complex"/>
    <property type="evidence" value="ECO:0007669"/>
    <property type="project" value="UniProtKB-KW"/>
</dbReference>
<dbReference type="GO" id="GO:0046933">
    <property type="term" value="F:proton-transporting ATP synthase activity, rotational mechanism"/>
    <property type="evidence" value="ECO:0007669"/>
    <property type="project" value="UniProtKB-UniRule"/>
</dbReference>
<dbReference type="GO" id="GO:0042777">
    <property type="term" value="P:proton motive force-driven plasma membrane ATP synthesis"/>
    <property type="evidence" value="ECO:0007669"/>
    <property type="project" value="TreeGrafter"/>
</dbReference>
<dbReference type="CDD" id="cd00310">
    <property type="entry name" value="ATP-synt_Fo_a_6"/>
    <property type="match status" value="1"/>
</dbReference>
<dbReference type="FunFam" id="1.20.120.220:FF:000002">
    <property type="entry name" value="ATP synthase subunit a"/>
    <property type="match status" value="1"/>
</dbReference>
<dbReference type="Gene3D" id="1.20.120.220">
    <property type="entry name" value="ATP synthase, F0 complex, subunit A"/>
    <property type="match status" value="1"/>
</dbReference>
<dbReference type="HAMAP" id="MF_01393">
    <property type="entry name" value="ATP_synth_a_bact"/>
    <property type="match status" value="1"/>
</dbReference>
<dbReference type="InterPro" id="IPR045082">
    <property type="entry name" value="ATP_syn_F0_a_bact/chloroplast"/>
</dbReference>
<dbReference type="InterPro" id="IPR000568">
    <property type="entry name" value="ATP_synth_F0_asu"/>
</dbReference>
<dbReference type="InterPro" id="IPR023011">
    <property type="entry name" value="ATP_synth_F0_asu_AS"/>
</dbReference>
<dbReference type="InterPro" id="IPR035908">
    <property type="entry name" value="F0_ATP_A_sf"/>
</dbReference>
<dbReference type="NCBIfam" id="TIGR01131">
    <property type="entry name" value="ATP_synt_6_or_A"/>
    <property type="match status" value="1"/>
</dbReference>
<dbReference type="NCBIfam" id="NF004477">
    <property type="entry name" value="PRK05815.1-1"/>
    <property type="match status" value="1"/>
</dbReference>
<dbReference type="PANTHER" id="PTHR42823">
    <property type="entry name" value="ATP SYNTHASE SUBUNIT A, CHLOROPLASTIC"/>
    <property type="match status" value="1"/>
</dbReference>
<dbReference type="PANTHER" id="PTHR42823:SF3">
    <property type="entry name" value="ATP SYNTHASE SUBUNIT A, CHLOROPLASTIC"/>
    <property type="match status" value="1"/>
</dbReference>
<dbReference type="Pfam" id="PF00119">
    <property type="entry name" value="ATP-synt_A"/>
    <property type="match status" value="1"/>
</dbReference>
<dbReference type="SUPFAM" id="SSF81336">
    <property type="entry name" value="F1F0 ATP synthase subunit A"/>
    <property type="match status" value="1"/>
</dbReference>
<dbReference type="PROSITE" id="PS00449">
    <property type="entry name" value="ATPASE_A"/>
    <property type="match status" value="1"/>
</dbReference>
<gene>
    <name evidence="1" type="primary">atpB</name>
    <name type="ordered locus">Rmag_1051</name>
</gene>
<protein>
    <recommendedName>
        <fullName evidence="1">ATP synthase subunit a</fullName>
    </recommendedName>
    <alternativeName>
        <fullName evidence="1">ATP synthase F0 sector subunit a</fullName>
    </alternativeName>
    <alternativeName>
        <fullName evidence="1">F-ATPase subunit 6</fullName>
    </alternativeName>
</protein>
<sequence length="284" mass="32094">MSATNEVITSGSYIKHHLQNLTYGQFPDGHWRFAHTTSEAKEMGFWAFHLDTLSISFILGALFLIFFYKVGKKMTSDTPSGAQNFIESVIDFINDNVRGSFNSQNPMVAPLALTTFIWIVLMNTMDLVPVDWLPYVAQQIGVWLGADPHHVFFKMVPTADPNATLGMSIGIFILIIYYSIKEKGAGGFAAELTFHPFGKMMLPFNLFLEGVNLIAKPVSLALRLFGNMYAGEMIFILIALLPFWVQWSLSLPWAIFHILIVLLQAFIFMTLVIVYMDMAHQKKH</sequence>
<organism>
    <name type="scientific">Ruthia magnifica subsp. Calyptogena magnifica</name>
    <dbReference type="NCBI Taxonomy" id="413404"/>
    <lineage>
        <taxon>Bacteria</taxon>
        <taxon>Pseudomonadati</taxon>
        <taxon>Pseudomonadota</taxon>
        <taxon>Gammaproteobacteria</taxon>
        <taxon>Candidatus Pseudothioglobaceae</taxon>
        <taxon>Candidatus Ruthturnera</taxon>
    </lineage>
</organism>